<protein>
    <recommendedName>
        <fullName>Fermitin family homolog 1</fullName>
    </recommendedName>
    <alternativeName>
        <fullName>Kindlerin</fullName>
    </alternativeName>
    <alternativeName>
        <fullName>Kindlin syndrome protein</fullName>
    </alternativeName>
    <alternativeName>
        <fullName>Kindlin-1</fullName>
    </alternativeName>
    <alternativeName>
        <fullName>Unc-112-related protein 1</fullName>
    </alternativeName>
</protein>
<sequence length="677" mass="77437">MLSSTDFTFASWELVVRVDHPNEEQQKDVTLRVSGDLHVGGVMLKLVEQINISQDWSDFALWWEQKHCWLLKTHWTLDKYGVQADAKLLFTPQHKMLRLRLPNLKMVRLRVSFSAVVFKAVSDICKILNIRRSEELSLLKPSGDYFKKKKKKDKNNKEPIIEDILNLESSPTASGSSVSPGLYSKTMTPIYDPINGTPASSTMTWFSDSPLTEQNCSILAFSQPPQSPEALADMYQPRSLVDKAKLNAGWLDSSRSLMEQGIQEDEQLLLRFKYYSFFDLNPKYDAVRINQLYEQARWAILLEEIDCTEEEMLIFAALQYHISKLSLSAETQDFAGESEVDEIEAALSNLEVTLEGGKADSLLEDITDIPKLADNLKLFRPKKLLPKAFKQYWFIFKDTSIAYFKNKELEQGEPLEKLNLRGCEVVPDVNVAGRKFGIKLLIPVADGMNEMYLRCDHENQYAQWMAACMLASKGKTMADSSYQPEVLNILSFLRMKNRNSASQVASSLENMDMNPECFVSPRCAKRHKSKQLAARILEAHQNVAQMPLVEAKLRFIQAWQSLPEFGLTYYLVRFKGSKKDDILGVSYNRLIKIDAATGIPVTTWRFTNIKQWNVNWETRQVVIEFDQNVFTAFTCLSADCKIVHEYIGGYIFLSTRSKDQNETLDEDLFHKLTGGQD</sequence>
<evidence type="ECO:0000255" key="1">
    <source>
        <dbReference type="PROSITE-ProRule" id="PRU00145"/>
    </source>
</evidence>
<evidence type="ECO:0000269" key="2">
    <source>
    </source>
</evidence>
<evidence type="ECO:0000269" key="3">
    <source>
    </source>
</evidence>
<evidence type="ECO:0000269" key="4">
    <source>
    </source>
</evidence>
<evidence type="ECO:0000269" key="5">
    <source>
    </source>
</evidence>
<evidence type="ECO:0000269" key="6">
    <source>
    </source>
</evidence>
<evidence type="ECO:0000269" key="7">
    <source>
    </source>
</evidence>
<evidence type="ECO:0000269" key="8">
    <source>
    </source>
</evidence>
<evidence type="ECO:0000269" key="9">
    <source>
    </source>
</evidence>
<evidence type="ECO:0000303" key="10">
    <source>
    </source>
</evidence>
<evidence type="ECO:0000303" key="11">
    <source>
    </source>
</evidence>
<evidence type="ECO:0000305" key="12"/>
<evidence type="ECO:0007744" key="13">
    <source>
    </source>
</evidence>
<evidence type="ECO:0007744" key="14">
    <source>
    </source>
</evidence>
<proteinExistence type="evidence at protein level"/>
<dbReference type="EMBL" id="AF443278">
    <property type="protein sequence ID" value="AAN75822.1"/>
    <property type="molecule type" value="mRNA"/>
</dbReference>
<dbReference type="EMBL" id="AY137240">
    <property type="protein sequence ID" value="AAM94174.1"/>
    <property type="molecule type" value="mRNA"/>
</dbReference>
<dbReference type="EMBL" id="AK000123">
    <property type="protein sequence ID" value="BAA90957.1"/>
    <property type="molecule type" value="mRNA"/>
</dbReference>
<dbReference type="EMBL" id="AK000747">
    <property type="protein sequence ID" value="BAA91358.1"/>
    <property type="status" value="ALT_INIT"/>
    <property type="molecule type" value="mRNA"/>
</dbReference>
<dbReference type="EMBL" id="AK092195">
    <property type="protein sequence ID" value="BAC03826.1"/>
    <property type="status" value="ALT_INIT"/>
    <property type="molecule type" value="mRNA"/>
</dbReference>
<dbReference type="EMBL" id="AL118505">
    <property type="status" value="NOT_ANNOTATED_CDS"/>
    <property type="molecule type" value="Genomic_DNA"/>
</dbReference>
<dbReference type="EMBL" id="CH471133">
    <property type="protein sequence ID" value="EAX10392.1"/>
    <property type="molecule type" value="Genomic_DNA"/>
</dbReference>
<dbReference type="EMBL" id="CH471133">
    <property type="protein sequence ID" value="EAX10393.1"/>
    <property type="molecule type" value="Genomic_DNA"/>
</dbReference>
<dbReference type="EMBL" id="BC035882">
    <property type="protein sequence ID" value="AAH35882.1"/>
    <property type="molecule type" value="mRNA"/>
</dbReference>
<dbReference type="CCDS" id="CCDS13098.1">
    <molecule id="Q9BQL6-1"/>
</dbReference>
<dbReference type="RefSeq" id="NP_060141.3">
    <molecule id="Q9BQL6-1"/>
    <property type="nucleotide sequence ID" value="NM_017671.4"/>
</dbReference>
<dbReference type="RefSeq" id="XP_024307703.1">
    <molecule id="Q9BQL6-1"/>
    <property type="nucleotide sequence ID" value="XM_024451935.2"/>
</dbReference>
<dbReference type="RefSeq" id="XP_047296215.1">
    <molecule id="Q9BQL6-1"/>
    <property type="nucleotide sequence ID" value="XM_047440259.1"/>
</dbReference>
<dbReference type="RefSeq" id="XP_054179606.1">
    <molecule id="Q9BQL6-1"/>
    <property type="nucleotide sequence ID" value="XM_054323631.1"/>
</dbReference>
<dbReference type="RefSeq" id="XP_054179607.1">
    <molecule id="Q9BQL6-1"/>
    <property type="nucleotide sequence ID" value="XM_054323632.1"/>
</dbReference>
<dbReference type="SMR" id="Q9BQL6"/>
<dbReference type="BioGRID" id="120752">
    <property type="interactions" value="39"/>
</dbReference>
<dbReference type="FunCoup" id="Q9BQL6">
    <property type="interactions" value="480"/>
</dbReference>
<dbReference type="IntAct" id="Q9BQL6">
    <property type="interactions" value="17"/>
</dbReference>
<dbReference type="MINT" id="Q9BQL6"/>
<dbReference type="STRING" id="9606.ENSP00000217289"/>
<dbReference type="BindingDB" id="Q9BQL6"/>
<dbReference type="ChEMBL" id="CHEMBL5465350"/>
<dbReference type="TCDB" id="8.A.25.1.8">
    <property type="family name" value="the ezrin/radixin/moesin (ezrin) family"/>
</dbReference>
<dbReference type="GlyGen" id="Q9BQL6">
    <property type="glycosylation" value="1 site, 1 O-linked glycan (1 site)"/>
</dbReference>
<dbReference type="iPTMnet" id="Q9BQL6"/>
<dbReference type="PhosphoSitePlus" id="Q9BQL6"/>
<dbReference type="SwissPalm" id="Q9BQL6"/>
<dbReference type="BioMuta" id="FERMT1"/>
<dbReference type="DMDM" id="26392456"/>
<dbReference type="jPOST" id="Q9BQL6"/>
<dbReference type="MassIVE" id="Q9BQL6"/>
<dbReference type="PaxDb" id="9606-ENSP00000217289"/>
<dbReference type="PeptideAtlas" id="Q9BQL6"/>
<dbReference type="ProteomicsDB" id="78697">
    <molecule id="Q9BQL6-1"/>
</dbReference>
<dbReference type="ProteomicsDB" id="78698">
    <molecule id="Q9BQL6-2"/>
</dbReference>
<dbReference type="ProteomicsDB" id="78699">
    <molecule id="Q9BQL6-3"/>
</dbReference>
<dbReference type="ProteomicsDB" id="78700">
    <molecule id="Q9BQL6-4"/>
</dbReference>
<dbReference type="Pumba" id="Q9BQL6"/>
<dbReference type="Antibodypedia" id="8379">
    <property type="antibodies" value="235 antibodies from 28 providers"/>
</dbReference>
<dbReference type="DNASU" id="55612"/>
<dbReference type="Ensembl" id="ENST00000217289.9">
    <molecule id="Q9BQL6-1"/>
    <property type="protein sequence ID" value="ENSP00000217289.4"/>
    <property type="gene ID" value="ENSG00000101311.17"/>
</dbReference>
<dbReference type="Ensembl" id="ENST00000699095.1">
    <molecule id="Q9BQL6-1"/>
    <property type="protein sequence ID" value="ENSP00000514127.1"/>
    <property type="gene ID" value="ENSG00000101311.17"/>
</dbReference>
<dbReference type="GeneID" id="55612"/>
<dbReference type="KEGG" id="hsa:55612"/>
<dbReference type="MANE-Select" id="ENST00000217289.9">
    <property type="protein sequence ID" value="ENSP00000217289.4"/>
    <property type="RefSeq nucleotide sequence ID" value="NM_017671.5"/>
    <property type="RefSeq protein sequence ID" value="NP_060141.3"/>
</dbReference>
<dbReference type="UCSC" id="uc002wmr.3">
    <molecule id="Q9BQL6-1"/>
    <property type="organism name" value="human"/>
</dbReference>
<dbReference type="AGR" id="HGNC:15889"/>
<dbReference type="CTD" id="55612"/>
<dbReference type="DisGeNET" id="55612"/>
<dbReference type="GeneCards" id="FERMT1"/>
<dbReference type="GeneReviews" id="FERMT1"/>
<dbReference type="HGNC" id="HGNC:15889">
    <property type="gene designation" value="FERMT1"/>
</dbReference>
<dbReference type="HPA" id="ENSG00000101311">
    <property type="expression patterns" value="Tissue enhanced (intestine)"/>
</dbReference>
<dbReference type="MalaCards" id="FERMT1"/>
<dbReference type="MIM" id="173650">
    <property type="type" value="phenotype"/>
</dbReference>
<dbReference type="MIM" id="607900">
    <property type="type" value="gene"/>
</dbReference>
<dbReference type="neXtProt" id="NX_Q9BQL6"/>
<dbReference type="OpenTargets" id="ENSG00000101311"/>
<dbReference type="Orphanet" id="2908">
    <property type="disease" value="Kindler epidermolysis bullosa"/>
</dbReference>
<dbReference type="PharmGKB" id="PA162388314"/>
<dbReference type="VEuPathDB" id="HostDB:ENSG00000101311"/>
<dbReference type="eggNOG" id="KOG3727">
    <property type="taxonomic scope" value="Eukaryota"/>
</dbReference>
<dbReference type="GeneTree" id="ENSGT00390000013444"/>
<dbReference type="HOGENOM" id="CLU_011611_0_0_1"/>
<dbReference type="InParanoid" id="Q9BQL6"/>
<dbReference type="OMA" id="GMFFCAP"/>
<dbReference type="OrthoDB" id="10057618at2759"/>
<dbReference type="PAN-GO" id="Q9BQL6">
    <property type="GO annotations" value="3 GO annotations based on evolutionary models"/>
</dbReference>
<dbReference type="PhylomeDB" id="Q9BQL6"/>
<dbReference type="TreeFam" id="TF314677"/>
<dbReference type="PathwayCommons" id="Q9BQL6"/>
<dbReference type="SignaLink" id="Q9BQL6"/>
<dbReference type="SIGNOR" id="Q9BQL6"/>
<dbReference type="BioGRID-ORCS" id="55612">
    <property type="hits" value="44 hits in 1158 CRISPR screens"/>
</dbReference>
<dbReference type="ChiTaRS" id="FERMT1">
    <property type="organism name" value="human"/>
</dbReference>
<dbReference type="GeneWiki" id="C20orf42"/>
<dbReference type="GenomeRNAi" id="55612"/>
<dbReference type="Pharos" id="Q9BQL6">
    <property type="development level" value="Tbio"/>
</dbReference>
<dbReference type="PRO" id="PR:Q9BQL6"/>
<dbReference type="Proteomes" id="UP000005640">
    <property type="component" value="Chromosome 20"/>
</dbReference>
<dbReference type="RNAct" id="Q9BQL6">
    <property type="molecule type" value="protein"/>
</dbReference>
<dbReference type="Bgee" id="ENSG00000101311">
    <property type="expression patterns" value="Expressed in mucosa of sigmoid colon and 166 other cell types or tissues"/>
</dbReference>
<dbReference type="ExpressionAtlas" id="Q9BQL6">
    <property type="expression patterns" value="baseline and differential"/>
</dbReference>
<dbReference type="GO" id="GO:0030054">
    <property type="term" value="C:cell junction"/>
    <property type="evidence" value="ECO:0000314"/>
    <property type="project" value="UniProtKB"/>
</dbReference>
<dbReference type="GO" id="GO:0071944">
    <property type="term" value="C:cell periphery"/>
    <property type="evidence" value="ECO:0000314"/>
    <property type="project" value="ARUK-UCL"/>
</dbReference>
<dbReference type="GO" id="GO:0005737">
    <property type="term" value="C:cytoplasm"/>
    <property type="evidence" value="ECO:0000314"/>
    <property type="project" value="ARUK-UCL"/>
</dbReference>
<dbReference type="GO" id="GO:0005856">
    <property type="term" value="C:cytoskeleton"/>
    <property type="evidence" value="ECO:0007669"/>
    <property type="project" value="UniProtKB-SubCell"/>
</dbReference>
<dbReference type="GO" id="GO:0005829">
    <property type="term" value="C:cytosol"/>
    <property type="evidence" value="ECO:0000314"/>
    <property type="project" value="UniProtKB"/>
</dbReference>
<dbReference type="GO" id="GO:0005925">
    <property type="term" value="C:focal adhesion"/>
    <property type="evidence" value="ECO:0000314"/>
    <property type="project" value="ARUK-UCL"/>
</dbReference>
<dbReference type="GO" id="GO:0032587">
    <property type="term" value="C:ruffle membrane"/>
    <property type="evidence" value="ECO:0007669"/>
    <property type="project" value="UniProtKB-SubCell"/>
</dbReference>
<dbReference type="GO" id="GO:0051015">
    <property type="term" value="F:actin filament binding"/>
    <property type="evidence" value="ECO:0007669"/>
    <property type="project" value="Ensembl"/>
</dbReference>
<dbReference type="GO" id="GO:0005178">
    <property type="term" value="F:integrin binding"/>
    <property type="evidence" value="ECO:0000318"/>
    <property type="project" value="GO_Central"/>
</dbReference>
<dbReference type="GO" id="GO:0071711">
    <property type="term" value="P:basement membrane organization"/>
    <property type="evidence" value="ECO:0007669"/>
    <property type="project" value="Ensembl"/>
</dbReference>
<dbReference type="GO" id="GO:0007155">
    <property type="term" value="P:cell adhesion"/>
    <property type="evidence" value="ECO:0000314"/>
    <property type="project" value="UniProtKB"/>
</dbReference>
<dbReference type="GO" id="GO:0007160">
    <property type="term" value="P:cell-matrix adhesion"/>
    <property type="evidence" value="ECO:0000318"/>
    <property type="project" value="GO_Central"/>
</dbReference>
<dbReference type="GO" id="GO:0090162">
    <property type="term" value="P:establishment of epithelial cell polarity"/>
    <property type="evidence" value="ECO:0000314"/>
    <property type="project" value="UniProtKB"/>
</dbReference>
<dbReference type="GO" id="GO:0007229">
    <property type="term" value="P:integrin-mediated signaling pathway"/>
    <property type="evidence" value="ECO:0007669"/>
    <property type="project" value="InterPro"/>
</dbReference>
<dbReference type="GO" id="GO:0051546">
    <property type="term" value="P:keratinocyte migration"/>
    <property type="evidence" value="ECO:0000314"/>
    <property type="project" value="UniProtKB"/>
</dbReference>
<dbReference type="GO" id="GO:0043616">
    <property type="term" value="P:keratinocyte proliferation"/>
    <property type="evidence" value="ECO:0000314"/>
    <property type="project" value="UniProtKB"/>
</dbReference>
<dbReference type="GO" id="GO:0090090">
    <property type="term" value="P:negative regulation of canonical Wnt signaling pathway"/>
    <property type="evidence" value="ECO:0007669"/>
    <property type="project" value="Ensembl"/>
</dbReference>
<dbReference type="GO" id="GO:0010629">
    <property type="term" value="P:negative regulation of gene expression"/>
    <property type="evidence" value="ECO:0007669"/>
    <property type="project" value="Ensembl"/>
</dbReference>
<dbReference type="GO" id="GO:0042308">
    <property type="term" value="P:negative regulation of protein import into nucleus"/>
    <property type="evidence" value="ECO:0007669"/>
    <property type="project" value="Ensembl"/>
</dbReference>
<dbReference type="GO" id="GO:2000647">
    <property type="term" value="P:negative regulation of stem cell proliferation"/>
    <property type="evidence" value="ECO:0007669"/>
    <property type="project" value="Ensembl"/>
</dbReference>
<dbReference type="GO" id="GO:0051886">
    <property type="term" value="P:negative regulation of timing of anagen"/>
    <property type="evidence" value="ECO:0007669"/>
    <property type="project" value="Ensembl"/>
</dbReference>
<dbReference type="GO" id="GO:0033630">
    <property type="term" value="P:positive regulation of cell adhesion mediated by integrin"/>
    <property type="evidence" value="ECO:0007669"/>
    <property type="project" value="Ensembl"/>
</dbReference>
<dbReference type="GO" id="GO:0001954">
    <property type="term" value="P:positive regulation of cell-matrix adhesion"/>
    <property type="evidence" value="ECO:0007669"/>
    <property type="project" value="Ensembl"/>
</dbReference>
<dbReference type="GO" id="GO:0033625">
    <property type="term" value="P:positive regulation of integrin activation"/>
    <property type="evidence" value="ECO:0000316"/>
    <property type="project" value="ARUK-UCL"/>
</dbReference>
<dbReference type="GO" id="GO:0071636">
    <property type="term" value="P:positive regulation of transforming growth factor beta production"/>
    <property type="evidence" value="ECO:0007669"/>
    <property type="project" value="Ensembl"/>
</dbReference>
<dbReference type="GO" id="GO:0030511">
    <property type="term" value="P:positive regulation of transforming growth factor beta receptor signaling pathway"/>
    <property type="evidence" value="ECO:0007669"/>
    <property type="project" value="Ensembl"/>
</dbReference>
<dbReference type="GO" id="GO:1903691">
    <property type="term" value="P:positive regulation of wound healing, spreading of epidermal cells"/>
    <property type="evidence" value="ECO:0000316"/>
    <property type="project" value="ARUK-UCL"/>
</dbReference>
<dbReference type="CDD" id="cd14473">
    <property type="entry name" value="FERM_B-lobe"/>
    <property type="match status" value="1"/>
</dbReference>
<dbReference type="CDD" id="cd13205">
    <property type="entry name" value="FERM_C_fermitin"/>
    <property type="match status" value="1"/>
</dbReference>
<dbReference type="CDD" id="cd17180">
    <property type="entry name" value="FERM_F0_KIND1"/>
    <property type="match status" value="1"/>
</dbReference>
<dbReference type="CDD" id="cd17183">
    <property type="entry name" value="FERM_F1_KIND1"/>
    <property type="match status" value="1"/>
</dbReference>
<dbReference type="CDD" id="cd01237">
    <property type="entry name" value="PH_fermitin"/>
    <property type="match status" value="1"/>
</dbReference>
<dbReference type="FunFam" id="2.30.29.30:FF:000037">
    <property type="entry name" value="Fermitin family homolog 2"/>
    <property type="match status" value="1"/>
</dbReference>
<dbReference type="FunFam" id="2.30.29.30:FF:000057">
    <property type="entry name" value="Fermitin family homolog 2 (Drosophila)"/>
    <property type="match status" value="1"/>
</dbReference>
<dbReference type="FunFam" id="3.10.20.90:FF:000035">
    <property type="entry name" value="Fermitin family homolog 2 (Drosophila)"/>
    <property type="match status" value="1"/>
</dbReference>
<dbReference type="Gene3D" id="3.10.20.90">
    <property type="entry name" value="Phosphatidylinositol 3-kinase Catalytic Subunit, Chain A, domain 1"/>
    <property type="match status" value="2"/>
</dbReference>
<dbReference type="Gene3D" id="2.30.29.30">
    <property type="entry name" value="Pleckstrin-homology domain (PH domain)/Phosphotyrosine-binding domain (PTB)"/>
    <property type="match status" value="2"/>
</dbReference>
<dbReference type="InterPro" id="IPR019749">
    <property type="entry name" value="Band_41_domain"/>
</dbReference>
<dbReference type="InterPro" id="IPR035963">
    <property type="entry name" value="FERM_2"/>
</dbReference>
<dbReference type="InterPro" id="IPR019748">
    <property type="entry name" value="FERM_central"/>
</dbReference>
<dbReference type="InterPro" id="IPR037843">
    <property type="entry name" value="Kindlin/fermitin"/>
</dbReference>
<dbReference type="InterPro" id="IPR040790">
    <property type="entry name" value="Kindlin_2_N"/>
</dbReference>
<dbReference type="InterPro" id="IPR011993">
    <property type="entry name" value="PH-like_dom_sf"/>
</dbReference>
<dbReference type="InterPro" id="IPR001849">
    <property type="entry name" value="PH_domain"/>
</dbReference>
<dbReference type="InterPro" id="IPR037837">
    <property type="entry name" value="PH_Kindlin/fermitin"/>
</dbReference>
<dbReference type="PANTHER" id="PTHR16160">
    <property type="entry name" value="FERMITIN 2-RELATED"/>
    <property type="match status" value="1"/>
</dbReference>
<dbReference type="PANTHER" id="PTHR16160:SF12">
    <property type="entry name" value="FERMITIN FAMILY HOMOLOG 1"/>
    <property type="match status" value="1"/>
</dbReference>
<dbReference type="Pfam" id="PF00373">
    <property type="entry name" value="FERM_M"/>
    <property type="match status" value="2"/>
</dbReference>
<dbReference type="Pfam" id="PF18124">
    <property type="entry name" value="Kindlin_2_N"/>
    <property type="match status" value="1"/>
</dbReference>
<dbReference type="Pfam" id="PF00169">
    <property type="entry name" value="PH"/>
    <property type="match status" value="1"/>
</dbReference>
<dbReference type="SMART" id="SM00295">
    <property type="entry name" value="B41"/>
    <property type="match status" value="1"/>
</dbReference>
<dbReference type="SMART" id="SM00233">
    <property type="entry name" value="PH"/>
    <property type="match status" value="1"/>
</dbReference>
<dbReference type="SUPFAM" id="SSF50729">
    <property type="entry name" value="PH domain-like"/>
    <property type="match status" value="2"/>
</dbReference>
<dbReference type="SUPFAM" id="SSF47031">
    <property type="entry name" value="Second domain of FERM"/>
    <property type="match status" value="1"/>
</dbReference>
<dbReference type="PROSITE" id="PS00661">
    <property type="entry name" value="FERM_2"/>
    <property type="match status" value="1"/>
</dbReference>
<dbReference type="PROSITE" id="PS50003">
    <property type="entry name" value="PH_DOMAIN"/>
    <property type="match status" value="1"/>
</dbReference>
<feature type="chain" id="PRO_0000219452" description="Fermitin family homolog 1">
    <location>
        <begin position="1"/>
        <end position="677"/>
    </location>
</feature>
<feature type="domain" description="FERM">
    <location>
        <begin position="96"/>
        <end position="653"/>
    </location>
</feature>
<feature type="domain" description="PH" evidence="1">
    <location>
        <begin position="377"/>
        <end position="473"/>
    </location>
</feature>
<feature type="modified residue" description="Phosphoserine" evidence="13">
    <location>
        <position position="170"/>
    </location>
</feature>
<feature type="modified residue" description="Phosphoserine" evidence="13">
    <location>
        <position position="179"/>
    </location>
</feature>
<feature type="modified residue" description="Phosphoserine" evidence="14">
    <location>
        <position position="361"/>
    </location>
</feature>
<feature type="splice variant" id="VSP_003809" description="In isoform 3." evidence="10">
    <location>
        <begin position="1"/>
        <end position="447"/>
    </location>
</feature>
<feature type="splice variant" id="VSP_009224" description="In isoform 4." evidence="11">
    <original>ENQYAQWMAACMLASKGKTMADSSYQPEVLNILSFLRM</original>
    <variation>VSKTPKILSHFTSTKPKSKTQKCFHKFRALLCHSAIAL</variation>
    <location>
        <begin position="458"/>
        <end position="495"/>
    </location>
</feature>
<feature type="splice variant" id="VSP_009225" description="In isoform 4." evidence="11">
    <location>
        <begin position="496"/>
        <end position="677"/>
    </location>
</feature>
<feature type="splice variant" id="VSP_003810" description="In isoform 2." evidence="12">
    <original>QNVAQMPLVEAKLR</original>
    <variation>LQAPFHSYRSLSHL</variation>
    <location>
        <begin position="541"/>
        <end position="554"/>
    </location>
</feature>
<feature type="splice variant" id="VSP_003811" description="In isoform 2." evidence="12">
    <location>
        <begin position="555"/>
        <end position="677"/>
    </location>
</feature>
<feature type="sequence variant" id="VAR_066942" description="In KNDLRS." evidence="9">
    <location>
        <position position="100"/>
    </location>
</feature>
<feature type="sequence variant" id="VAR_048368" description="In dbSNP:rs16991866.">
    <original>I</original>
    <variation>T</variation>
    <location>
        <position position="160"/>
    </location>
</feature>
<feature type="sequence variant" id="VAR_061035" description="In dbSNP:rs55666319.">
    <original>V</original>
    <variation>A</variation>
    <location>
        <position position="241"/>
    </location>
</feature>
<feature type="sequence variant" id="VAR_066943" description="In KNDLRS; dbSNP:rs869312718." evidence="9">
    <original>S</original>
    <variation>P</variation>
    <location>
        <position position="400"/>
    </location>
</feature>
<feature type="sequence variant" id="VAR_014398" description="In dbSNP:rs2232074." evidence="3 6">
    <original>R</original>
    <variation>K</variation>
    <location>
        <position position="526"/>
    </location>
</feature>
<feature type="sequence variant" id="VAR_014399" description="In dbSNP:rs2232078.">
    <original>A</original>
    <variation>T</variation>
    <location>
        <position position="534"/>
    </location>
</feature>
<feature type="sequence variant" id="VAR_066944" description="In KNDLRS; dbSNP:rs869312719." evidence="9">
    <original>W</original>
    <variation>R</variation>
    <location>
        <position position="559"/>
    </location>
</feature>
<feature type="sequence variant" id="VAR_066945" description="In KNDLRS; dbSNP:rs869312721." evidence="9">
    <location>
        <position position="623"/>
    </location>
</feature>
<feature type="sequence conflict" description="In Ref. 4; BAC03826." evidence="12" ref="4">
    <original>V</original>
    <variation>A</variation>
    <location>
        <position position="117"/>
    </location>
</feature>
<feature type="sequence conflict" description="In Ref. 4; BAC03826." evidence="12" ref="4">
    <original>I</original>
    <variation>T</variation>
    <location>
        <position position="262"/>
    </location>
</feature>
<accession>Q9BQL6</accession>
<accession>D3DW10</accession>
<accession>Q8IX34</accession>
<accession>Q8IYH2</accession>
<accession>Q9NWM2</accession>
<accession>Q9NXQ3</accession>
<name>FERM1_HUMAN</name>
<gene>
    <name type="primary">FERMT1</name>
    <name type="synonym">C20orf42</name>
    <name type="synonym">KIND1</name>
    <name type="synonym">URP1</name>
</gene>
<comment type="function">
    <text evidence="5 7 8">Involved in cell adhesion. Contributes to integrin activation. When coexpressed with talin, potentiates activation of ITGA2B. Required for normal keratinocyte proliferation. Required for normal polarization of basal keratinocytes in skin, and for normal cell shape. Required for normal adhesion of keratinocytes to fibronectin and laminin, and for normal keratinocyte migration to wound sites. May mediate TGF-beta 1 signaling in tumor progression.</text>
</comment>
<comment type="subunit">
    <text evidence="5">Interacts with the cytoplasmic domain of integrins ITGB1 and ITGB3.</text>
</comment>
<comment type="subcellular location">
    <subcellularLocation>
        <location>Cytoplasm</location>
        <location>Cytoskeleton</location>
    </subcellularLocation>
    <subcellularLocation>
        <location>Cell junction</location>
        <location>Focal adhesion</location>
    </subcellularLocation>
    <subcellularLocation>
        <location>Cell projection</location>
        <location>Ruffle membrane</location>
        <topology>Peripheral membrane protein</topology>
        <orientation>Cytoplasmic side</orientation>
    </subcellularLocation>
    <text>Constituent of focal adhesions. Localized at the basal aspect of skin keratinocytes, close to the cell membrane. Colocalizes with filamentous actin. Upon TGFB1 treatment, it localizes to membrane ruffles.</text>
</comment>
<comment type="alternative products">
    <event type="alternative splicing"/>
    <isoform>
        <id>Q9BQL6-1</id>
        <name>1</name>
        <sequence type="displayed"/>
    </isoform>
    <isoform>
        <id>Q9BQL6-2</id>
        <name>2</name>
        <sequence type="described" ref="VSP_003810 VSP_003811"/>
    </isoform>
    <isoform>
        <id>Q9BQL6-3</id>
        <name>3</name>
        <sequence type="described" ref="VSP_003809"/>
    </isoform>
    <isoform>
        <id>Q9BQL6-4</id>
        <name>4</name>
        <sequence type="described" ref="VSP_009224 VSP_009225"/>
    </isoform>
</comment>
<comment type="tissue specificity">
    <text evidence="2 3 4 5 7">Expressed in brain, skeletal muscle, kidney, colon, adrenal gland, prostate, and placenta. Weakly or not expressed in heart, thymus, spleen, liver, small intestine, bone marrow, lung and peripheral blood leukocytes. Overexpressed in some colon and lung tumors. In skin, it is localized within the epidermis and particularly in basal keratocytes. Not detected in epidermal melanocytes and dermal fibroblasts.</text>
</comment>
<comment type="induction">
    <text evidence="5">By TGFB1.</text>
</comment>
<comment type="domain">
    <text evidence="8">The FERM domain is not correctly detected by PROSITE or Pfam techniques because it contains the insertion of a PH domain. The FERM domain contains the subdomains F1, F2 and F3. It is preceded by a F0 domain with a ubiquitin-like fold. The F0 domain is required for integrin activation and for localization at focal adhesions.</text>
</comment>
<comment type="disease" evidence="2 4 9">
    <disease id="DI-01865">
        <name>Kindler syndrome</name>
        <acronym>KNDLRS</acronym>
        <description>An autosomal recessive skin disorder characterized by skin blistering, photosensitivity, progressive poikiloderma, and extensive skin atrophy. Additional clinical features include gingival erosions, ocular, esophageal, gastrointestinal and urogenital involvement, and an increased risk of mucocutaneous malignancy.</description>
        <dbReference type="MIM" id="173650"/>
    </disease>
    <text evidence="9">The disease is caused by variants affecting the gene represented in this entry. Although most FERMT1 mutations are predicted to lead to premature termination of translation, and to loss of FERMT1 function, significant clinical variability is observed among patients. There is an association of FERMT1 missense and in-frame deletion mutations with milder disease phenotypes, and later onset of complications (PubMed:21936020).</text>
</comment>
<comment type="similarity">
    <text evidence="12">Belongs to the kindlin family.</text>
</comment>
<comment type="sequence caution" evidence="12">
    <conflict type="erroneous initiation">
        <sequence resource="EMBL-CDS" id="BAA91358"/>
    </conflict>
</comment>
<comment type="sequence caution" evidence="12">
    <conflict type="erroneous initiation">
        <sequence resource="EMBL-CDS" id="BAC03826"/>
    </conflict>
</comment>
<reference key="1">
    <citation type="journal article" date="2003" name="Biochim. Biophys. Acta">
        <title>URP1: a member of a novel family of PH and FERM domain-containing membrane-associated proteins is significantly over-expressed in lung and colon carcinomas.</title>
        <authorList>
            <person name="Weinstein E.J."/>
            <person name="Bourner M."/>
            <person name="Head R."/>
            <person name="Zakeri H."/>
            <person name="Bauer C."/>
            <person name="Mazzarella R."/>
        </authorList>
    </citation>
    <scope>NUCLEOTIDE SEQUENCE [MRNA] (ISOFORM 1)</scope>
    <scope>TISSUE SPECIFICITY</scope>
    <scope>VARIANT LYS-526</scope>
    <source>
        <tissue>Colon cancer</tissue>
    </source>
</reference>
<reference key="2">
    <citation type="journal article" date="2003" name="Am. J. Hum. Genet.">
        <title>Loss of kindlin-1, a human homolog of the Caenorhabditis elegans actin-extracellular-matrix linker protein UNC-112, causes Kindler syndrome.</title>
        <authorList>
            <person name="Siegel D.H."/>
            <person name="Ashton G.H.S."/>
            <person name="Penagos H.G."/>
            <person name="Lee J.V."/>
            <person name="Feiler H.S."/>
            <person name="Wilhelmsen K.C."/>
            <person name="South A.P."/>
            <person name="Smith F.J.D."/>
            <person name="Prescott A.R."/>
            <person name="Wessagowit V."/>
            <person name="Oyama N."/>
            <person name="Akiyama M."/>
            <person name="Al-Aboud D."/>
            <person name="Al-Aboud K."/>
            <person name="Al-Githami A."/>
            <person name="Al-Hawsawi K."/>
            <person name="Al-Ismaily A."/>
            <person name="Al-Suwaid R."/>
            <person name="Atherton D.J."/>
            <person name="Caputo R."/>
            <person name="Fine J.-D."/>
            <person name="Frieden I.J."/>
            <person name="Fuchs E."/>
            <person name="Haber R.M."/>
            <person name="Harada T."/>
            <person name="Kitajima Y."/>
            <person name="Mallory S.B."/>
            <person name="Ogawa H."/>
            <person name="Sahin S."/>
            <person name="Shimizu H."/>
            <person name="Suga Y."/>
            <person name="Tadini G."/>
            <person name="Tsuchiya K."/>
            <person name="Wiebe C.B."/>
            <person name="Wojnarowska F."/>
            <person name="Zaghloul A.B."/>
            <person name="Hamada T."/>
            <person name="Mallipeddi R."/>
            <person name="Eady R.A.J."/>
            <person name="McLean W.H.I."/>
            <person name="McGrath J.A."/>
            <person name="Epstein E.H. Jr."/>
        </authorList>
    </citation>
    <scope>NUCLEOTIDE SEQUENCE [MRNA] (ISOFORM 1)</scope>
    <scope>INVOLVEMENT IN KNDLRS</scope>
    <scope>SUBCELLULAR LOCATION</scope>
    <scope>TISSUE SPECIFICITY</scope>
</reference>
<reference key="3">
    <citation type="journal article" date="2004" name="Nat. Genet.">
        <title>Complete sequencing and characterization of 21,243 full-length human cDNAs.</title>
        <authorList>
            <person name="Ota T."/>
            <person name="Suzuki Y."/>
            <person name="Nishikawa T."/>
            <person name="Otsuki T."/>
            <person name="Sugiyama T."/>
            <person name="Irie R."/>
            <person name="Wakamatsu A."/>
            <person name="Hayashi K."/>
            <person name="Sato H."/>
            <person name="Nagai K."/>
            <person name="Kimura K."/>
            <person name="Makita H."/>
            <person name="Sekine M."/>
            <person name="Obayashi M."/>
            <person name="Nishi T."/>
            <person name="Shibahara T."/>
            <person name="Tanaka T."/>
            <person name="Ishii S."/>
            <person name="Yamamoto J."/>
            <person name="Saito K."/>
            <person name="Kawai Y."/>
            <person name="Isono Y."/>
            <person name="Nakamura Y."/>
            <person name="Nagahari K."/>
            <person name="Murakami K."/>
            <person name="Yasuda T."/>
            <person name="Iwayanagi T."/>
            <person name="Wagatsuma M."/>
            <person name="Shiratori A."/>
            <person name="Sudo H."/>
            <person name="Hosoiri T."/>
            <person name="Kaku Y."/>
            <person name="Kodaira H."/>
            <person name="Kondo H."/>
            <person name="Sugawara M."/>
            <person name="Takahashi M."/>
            <person name="Kanda K."/>
            <person name="Yokoi T."/>
            <person name="Furuya T."/>
            <person name="Kikkawa E."/>
            <person name="Omura Y."/>
            <person name="Abe K."/>
            <person name="Kamihara K."/>
            <person name="Katsuta N."/>
            <person name="Sato K."/>
            <person name="Tanikawa M."/>
            <person name="Yamazaki M."/>
            <person name="Ninomiya K."/>
            <person name="Ishibashi T."/>
            <person name="Yamashita H."/>
            <person name="Murakawa K."/>
            <person name="Fujimori K."/>
            <person name="Tanai H."/>
            <person name="Kimata M."/>
            <person name="Watanabe M."/>
            <person name="Hiraoka S."/>
            <person name="Chiba Y."/>
            <person name="Ishida S."/>
            <person name="Ono Y."/>
            <person name="Takiguchi S."/>
            <person name="Watanabe S."/>
            <person name="Yosida M."/>
            <person name="Hotuta T."/>
            <person name="Kusano J."/>
            <person name="Kanehori K."/>
            <person name="Takahashi-Fujii A."/>
            <person name="Hara H."/>
            <person name="Tanase T.-O."/>
            <person name="Nomura Y."/>
            <person name="Togiya S."/>
            <person name="Komai F."/>
            <person name="Hara R."/>
            <person name="Takeuchi K."/>
            <person name="Arita M."/>
            <person name="Imose N."/>
            <person name="Musashino K."/>
            <person name="Yuuki H."/>
            <person name="Oshima A."/>
            <person name="Sasaki N."/>
            <person name="Aotsuka S."/>
            <person name="Yoshikawa Y."/>
            <person name="Matsunawa H."/>
            <person name="Ichihara T."/>
            <person name="Shiohata N."/>
            <person name="Sano S."/>
            <person name="Moriya S."/>
            <person name="Momiyama H."/>
            <person name="Satoh N."/>
            <person name="Takami S."/>
            <person name="Terashima Y."/>
            <person name="Suzuki O."/>
            <person name="Nakagawa S."/>
            <person name="Senoh A."/>
            <person name="Mizoguchi H."/>
            <person name="Goto Y."/>
            <person name="Shimizu F."/>
            <person name="Wakebe H."/>
            <person name="Hishigaki H."/>
            <person name="Watanabe T."/>
            <person name="Sugiyama A."/>
            <person name="Takemoto M."/>
            <person name="Kawakami B."/>
            <person name="Yamazaki M."/>
            <person name="Watanabe K."/>
            <person name="Kumagai A."/>
            <person name="Itakura S."/>
            <person name="Fukuzumi Y."/>
            <person name="Fujimori Y."/>
            <person name="Komiyama M."/>
            <person name="Tashiro H."/>
            <person name="Tanigami A."/>
            <person name="Fujiwara T."/>
            <person name="Ono T."/>
            <person name="Yamada K."/>
            <person name="Fujii Y."/>
            <person name="Ozaki K."/>
            <person name="Hirao M."/>
            <person name="Ohmori Y."/>
            <person name="Kawabata A."/>
            <person name="Hikiji T."/>
            <person name="Kobatake N."/>
            <person name="Inagaki H."/>
            <person name="Ikema Y."/>
            <person name="Okamoto S."/>
            <person name="Okitani R."/>
            <person name="Kawakami T."/>
            <person name="Noguchi S."/>
            <person name="Itoh T."/>
            <person name="Shigeta K."/>
            <person name="Senba T."/>
            <person name="Matsumura K."/>
            <person name="Nakajima Y."/>
            <person name="Mizuno T."/>
            <person name="Morinaga M."/>
            <person name="Sasaki M."/>
            <person name="Togashi T."/>
            <person name="Oyama M."/>
            <person name="Hata H."/>
            <person name="Watanabe M."/>
            <person name="Komatsu T."/>
            <person name="Mizushima-Sugano J."/>
            <person name="Satoh T."/>
            <person name="Shirai Y."/>
            <person name="Takahashi Y."/>
            <person name="Nakagawa K."/>
            <person name="Okumura K."/>
            <person name="Nagase T."/>
            <person name="Nomura N."/>
            <person name="Kikuchi H."/>
            <person name="Masuho Y."/>
            <person name="Yamashita R."/>
            <person name="Nakai K."/>
            <person name="Yada T."/>
            <person name="Nakamura Y."/>
            <person name="Ohara O."/>
            <person name="Isogai T."/>
            <person name="Sugano S."/>
        </authorList>
    </citation>
    <scope>NUCLEOTIDE SEQUENCE [LARGE SCALE MRNA] (ISOFORM 3)</scope>
    <scope>PARTIAL NUCLEOTIDE SEQUENCE [LARGE SCALE MRNA] (ISOFORMS 1 AND 2)</scope>
    <scope>VARIANT LYS-526</scope>
    <source>
        <tissue>Colon</tissue>
        <tissue>Hepatoma</tissue>
        <tissue>Teratocarcinoma</tissue>
    </source>
</reference>
<reference key="4">
    <citation type="journal article" date="2001" name="Nature">
        <title>The DNA sequence and comparative analysis of human chromosome 20.</title>
        <authorList>
            <person name="Deloukas P."/>
            <person name="Matthews L.H."/>
            <person name="Ashurst J.L."/>
            <person name="Burton J."/>
            <person name="Gilbert J.G.R."/>
            <person name="Jones M."/>
            <person name="Stavrides G."/>
            <person name="Almeida J.P."/>
            <person name="Babbage A.K."/>
            <person name="Bagguley C.L."/>
            <person name="Bailey J."/>
            <person name="Barlow K.F."/>
            <person name="Bates K.N."/>
            <person name="Beard L.M."/>
            <person name="Beare D.M."/>
            <person name="Beasley O.P."/>
            <person name="Bird C.P."/>
            <person name="Blakey S.E."/>
            <person name="Bridgeman A.M."/>
            <person name="Brown A.J."/>
            <person name="Buck D."/>
            <person name="Burrill W.D."/>
            <person name="Butler A.P."/>
            <person name="Carder C."/>
            <person name="Carter N.P."/>
            <person name="Chapman J.C."/>
            <person name="Clamp M."/>
            <person name="Clark G."/>
            <person name="Clark L.N."/>
            <person name="Clark S.Y."/>
            <person name="Clee C.M."/>
            <person name="Clegg S."/>
            <person name="Cobley V.E."/>
            <person name="Collier R.E."/>
            <person name="Connor R.E."/>
            <person name="Corby N.R."/>
            <person name="Coulson A."/>
            <person name="Coville G.J."/>
            <person name="Deadman R."/>
            <person name="Dhami P.D."/>
            <person name="Dunn M."/>
            <person name="Ellington A.G."/>
            <person name="Frankland J.A."/>
            <person name="Fraser A."/>
            <person name="French L."/>
            <person name="Garner P."/>
            <person name="Grafham D.V."/>
            <person name="Griffiths C."/>
            <person name="Griffiths M.N.D."/>
            <person name="Gwilliam R."/>
            <person name="Hall R.E."/>
            <person name="Hammond S."/>
            <person name="Harley J.L."/>
            <person name="Heath P.D."/>
            <person name="Ho S."/>
            <person name="Holden J.L."/>
            <person name="Howden P.J."/>
            <person name="Huckle E."/>
            <person name="Hunt A.R."/>
            <person name="Hunt S.E."/>
            <person name="Jekosch K."/>
            <person name="Johnson C.M."/>
            <person name="Johnson D."/>
            <person name="Kay M.P."/>
            <person name="Kimberley A.M."/>
            <person name="King A."/>
            <person name="Knights A."/>
            <person name="Laird G.K."/>
            <person name="Lawlor S."/>
            <person name="Lehvaeslaiho M.H."/>
            <person name="Leversha M.A."/>
            <person name="Lloyd C."/>
            <person name="Lloyd D.M."/>
            <person name="Lovell J.D."/>
            <person name="Marsh V.L."/>
            <person name="Martin S.L."/>
            <person name="McConnachie L.J."/>
            <person name="McLay K."/>
            <person name="McMurray A.A."/>
            <person name="Milne S.A."/>
            <person name="Mistry D."/>
            <person name="Moore M.J.F."/>
            <person name="Mullikin J.C."/>
            <person name="Nickerson T."/>
            <person name="Oliver K."/>
            <person name="Parker A."/>
            <person name="Patel R."/>
            <person name="Pearce T.A.V."/>
            <person name="Peck A.I."/>
            <person name="Phillimore B.J.C.T."/>
            <person name="Prathalingam S.R."/>
            <person name="Plumb R.W."/>
            <person name="Ramsay H."/>
            <person name="Rice C.M."/>
            <person name="Ross M.T."/>
            <person name="Scott C.E."/>
            <person name="Sehra H.K."/>
            <person name="Shownkeen R."/>
            <person name="Sims S."/>
            <person name="Skuce C.D."/>
            <person name="Smith M.L."/>
            <person name="Soderlund C."/>
            <person name="Steward C.A."/>
            <person name="Sulston J.E."/>
            <person name="Swann R.M."/>
            <person name="Sycamore N."/>
            <person name="Taylor R."/>
            <person name="Tee L."/>
            <person name="Thomas D.W."/>
            <person name="Thorpe A."/>
            <person name="Tracey A."/>
            <person name="Tromans A.C."/>
            <person name="Vaudin M."/>
            <person name="Wall M."/>
            <person name="Wallis J.M."/>
            <person name="Whitehead S.L."/>
            <person name="Whittaker P."/>
            <person name="Willey D.L."/>
            <person name="Williams L."/>
            <person name="Williams S.A."/>
            <person name="Wilming L."/>
            <person name="Wray P.W."/>
            <person name="Hubbard T."/>
            <person name="Durbin R.M."/>
            <person name="Bentley D.R."/>
            <person name="Beck S."/>
            <person name="Rogers J."/>
        </authorList>
    </citation>
    <scope>NUCLEOTIDE SEQUENCE [LARGE SCALE GENOMIC DNA]</scope>
</reference>
<reference key="5">
    <citation type="submission" date="2005-09" db="EMBL/GenBank/DDBJ databases">
        <authorList>
            <person name="Mural R.J."/>
            <person name="Istrail S."/>
            <person name="Sutton G.G."/>
            <person name="Florea L."/>
            <person name="Halpern A.L."/>
            <person name="Mobarry C.M."/>
            <person name="Lippert R."/>
            <person name="Walenz B."/>
            <person name="Shatkay H."/>
            <person name="Dew I."/>
            <person name="Miller J.R."/>
            <person name="Flanigan M.J."/>
            <person name="Edwards N.J."/>
            <person name="Bolanos R."/>
            <person name="Fasulo D."/>
            <person name="Halldorsson B.V."/>
            <person name="Hannenhalli S."/>
            <person name="Turner R."/>
            <person name="Yooseph S."/>
            <person name="Lu F."/>
            <person name="Nusskern D.R."/>
            <person name="Shue B.C."/>
            <person name="Zheng X.H."/>
            <person name="Zhong F."/>
            <person name="Delcher A.L."/>
            <person name="Huson D.H."/>
            <person name="Kravitz S.A."/>
            <person name="Mouchard L."/>
            <person name="Reinert K."/>
            <person name="Remington K.A."/>
            <person name="Clark A.G."/>
            <person name="Waterman M.S."/>
            <person name="Eichler E.E."/>
            <person name="Adams M.D."/>
            <person name="Hunkapiller M.W."/>
            <person name="Myers E.W."/>
            <person name="Venter J.C."/>
        </authorList>
    </citation>
    <scope>NUCLEOTIDE SEQUENCE [LARGE SCALE GENOMIC DNA]</scope>
</reference>
<reference key="6">
    <citation type="journal article" date="2004" name="Genome Res.">
        <title>The status, quality, and expansion of the NIH full-length cDNA project: the Mammalian Gene Collection (MGC).</title>
        <authorList>
            <consortium name="The MGC Project Team"/>
        </authorList>
    </citation>
    <scope>NUCLEOTIDE SEQUENCE [LARGE SCALE MRNA] (ISOFORM 4)</scope>
    <source>
        <tissue>Brain</tissue>
    </source>
</reference>
<reference key="7">
    <citation type="journal article" date="2003" name="Hum. Mol. Genet.">
        <title>Identification of mutations in a new gene encoding a FERM family protein with a pleckstrin homology domain in Kindler syndrome.</title>
        <authorList>
            <person name="Jobard F."/>
            <person name="Bouadjar B."/>
            <person name="Caux F."/>
            <person name="Hadj-Rabia S."/>
            <person name="Has C."/>
            <person name="Matsuda F."/>
            <person name="Weissenbach J."/>
            <person name="Lathrop M."/>
            <person name="Prud'homme J.-F."/>
            <person name="Fischer J."/>
        </authorList>
    </citation>
    <scope>INVOLVEMENT IN KNDLRS</scope>
    <scope>TISSUE SPECIFICITY</scope>
</reference>
<reference key="8">
    <citation type="journal article" date="2004" name="J. Biol. Chem.">
        <title>The Kindler syndrome protein is regulated by transforming growth factor-beta and involved in integrin-mediated adhesion.</title>
        <authorList>
            <person name="Kloeker S."/>
            <person name="Major M.B."/>
            <person name="Calderwood D.A."/>
            <person name="Ginsberg M.H."/>
            <person name="Jones D.A."/>
            <person name="Beckerle M.C."/>
        </authorList>
    </citation>
    <scope>FUNCTION</scope>
    <scope>SUBCELLULAR LOCATION</scope>
    <scope>TISSUE SPECIFICITY</scope>
    <scope>INDUCTION</scope>
    <scope>INTERACTION WITH ITGB1 AND ITGB3</scope>
</reference>
<reference key="9">
    <citation type="journal article" date="2006" name="J. Biol. Chem.">
        <title>Kindlin-1 is a phosphoprotein involved in regulation of polarity, proliferation, and motility of epidermal keratinocytes.</title>
        <authorList>
            <person name="Herz C."/>
            <person name="Aumailley M."/>
            <person name="Schulte C."/>
            <person name="Schlotzer-Schrehardt U."/>
            <person name="Bruckner-Tuderman L."/>
            <person name="Has C."/>
        </authorList>
    </citation>
    <scope>FUNCTION</scope>
    <scope>SUBCELLULAR LOCATION</scope>
    <scope>TISSUE SPECIFICITY</scope>
    <scope>PHOSPHORYLATION</scope>
</reference>
<reference key="10">
    <citation type="journal article" date="2008" name="Proc. Natl. Acad. Sci. U.S.A.">
        <title>A quantitative atlas of mitotic phosphorylation.</title>
        <authorList>
            <person name="Dephoure N."/>
            <person name="Zhou C."/>
            <person name="Villen J."/>
            <person name="Beausoleil S.A."/>
            <person name="Bakalarski C.E."/>
            <person name="Elledge S.J."/>
            <person name="Gygi S.P."/>
        </authorList>
    </citation>
    <scope>PHOSPHORYLATION [LARGE SCALE ANALYSIS] AT SER-170 AND SER-179</scope>
    <scope>IDENTIFICATION BY MASS SPECTROMETRY [LARGE SCALE ANALYSIS]</scope>
    <source>
        <tissue>Cervix carcinoma</tissue>
    </source>
</reference>
<reference key="11">
    <citation type="journal article" date="2009" name="J. Mol. Biol.">
        <title>The structure of the N-terminus of kindlin-1: a domain important for alphaIIbbeta3 integrin activation.</title>
        <authorList>
            <person name="Goult B.T."/>
            <person name="Bouaouina M."/>
            <person name="Harburger D.S."/>
            <person name="Bate N."/>
            <person name="Patel B."/>
            <person name="Anthis N.J."/>
            <person name="Campbell I.D."/>
            <person name="Calderwood D.A."/>
            <person name="Barsukov I.L."/>
            <person name="Roberts G.C."/>
            <person name="Critchley D.R."/>
        </authorList>
    </citation>
    <scope>FUNCTION</scope>
    <scope>SUBCELLULAR LOCATION</scope>
    <scope>DOMAIN</scope>
</reference>
<reference key="12">
    <citation type="journal article" date="2010" name="Sci. Signal.">
        <title>Quantitative phosphoproteomics reveals widespread full phosphorylation site occupancy during mitosis.</title>
        <authorList>
            <person name="Olsen J.V."/>
            <person name="Vermeulen M."/>
            <person name="Santamaria A."/>
            <person name="Kumar C."/>
            <person name="Miller M.L."/>
            <person name="Jensen L.J."/>
            <person name="Gnad F."/>
            <person name="Cox J."/>
            <person name="Jensen T.S."/>
            <person name="Nigg E.A."/>
            <person name="Brunak S."/>
            <person name="Mann M."/>
        </authorList>
    </citation>
    <scope>IDENTIFICATION BY MASS SPECTROMETRY [LARGE SCALE ANALYSIS]</scope>
    <source>
        <tissue>Cervix carcinoma</tissue>
    </source>
</reference>
<reference key="13">
    <citation type="journal article" date="2011" name="BMC Syst. Biol.">
        <title>Initial characterization of the human central proteome.</title>
        <authorList>
            <person name="Burkard T.R."/>
            <person name="Planyavsky M."/>
            <person name="Kaupe I."/>
            <person name="Breitwieser F.P."/>
            <person name="Buerckstuemmer T."/>
            <person name="Bennett K.L."/>
            <person name="Superti-Furga G."/>
            <person name="Colinge J."/>
        </authorList>
    </citation>
    <scope>IDENTIFICATION BY MASS SPECTROMETRY [LARGE SCALE ANALYSIS]</scope>
</reference>
<reference key="14">
    <citation type="journal article" date="2013" name="J. Proteome Res.">
        <title>Toward a comprehensive characterization of a human cancer cell phosphoproteome.</title>
        <authorList>
            <person name="Zhou H."/>
            <person name="Di Palma S."/>
            <person name="Preisinger C."/>
            <person name="Peng M."/>
            <person name="Polat A.N."/>
            <person name="Heck A.J."/>
            <person name="Mohammed S."/>
        </authorList>
    </citation>
    <scope>PHOSPHORYLATION [LARGE SCALE ANALYSIS] AT SER-361</scope>
    <scope>IDENTIFICATION BY MASS SPECTROMETRY [LARGE SCALE ANALYSIS]</scope>
    <source>
        <tissue>Cervix carcinoma</tissue>
    </source>
</reference>
<reference key="15">
    <citation type="journal article" date="2011" name="Hum. Mutat.">
        <title>Kindler syndrome: extension of FERMT1 mutational spectrum and natural history.</title>
        <authorList>
            <person name="Has C."/>
            <person name="Castiglia D."/>
            <person name="del Rio M."/>
            <person name="Diez M.G."/>
            <person name="Piccinni E."/>
            <person name="Kiritsi D."/>
            <person name="Kohlhase J."/>
            <person name="Itin P."/>
            <person name="Martin L."/>
            <person name="Fischer J."/>
            <person name="Zambruno G."/>
            <person name="Bruckner-Tuderman L."/>
        </authorList>
    </citation>
    <scope>VARIANTS KNDLRS ARG-100 DEL; PRO-400; ARG-559 AND ILE-623 DEL</scope>
</reference>
<keyword id="KW-0025">Alternative splicing</keyword>
<keyword id="KW-0130">Cell adhesion</keyword>
<keyword id="KW-0965">Cell junction</keyword>
<keyword id="KW-1003">Cell membrane</keyword>
<keyword id="KW-0966">Cell projection</keyword>
<keyword id="KW-0963">Cytoplasm</keyword>
<keyword id="KW-0206">Cytoskeleton</keyword>
<keyword id="KW-0225">Disease variant</keyword>
<keyword id="KW-0472">Membrane</keyword>
<keyword id="KW-0597">Phosphoprotein</keyword>
<keyword id="KW-1267">Proteomics identification</keyword>
<keyword id="KW-1185">Reference proteome</keyword>
<organism>
    <name type="scientific">Homo sapiens</name>
    <name type="common">Human</name>
    <dbReference type="NCBI Taxonomy" id="9606"/>
    <lineage>
        <taxon>Eukaryota</taxon>
        <taxon>Metazoa</taxon>
        <taxon>Chordata</taxon>
        <taxon>Craniata</taxon>
        <taxon>Vertebrata</taxon>
        <taxon>Euteleostomi</taxon>
        <taxon>Mammalia</taxon>
        <taxon>Eutheria</taxon>
        <taxon>Euarchontoglires</taxon>
        <taxon>Primates</taxon>
        <taxon>Haplorrhini</taxon>
        <taxon>Catarrhini</taxon>
        <taxon>Hominidae</taxon>
        <taxon>Homo</taxon>
    </lineage>
</organism>